<name>PSBY_RIPO1</name>
<reference key="1">
    <citation type="journal article" date="2011" name="MBio">
        <title>Novel metabolic attributes of the genus Cyanothece, comprising a group of unicellular nitrogen-fixing Cyanobacteria.</title>
        <authorList>
            <person name="Bandyopadhyay A."/>
            <person name="Elvitigala T."/>
            <person name="Welsh E."/>
            <person name="Stockel J."/>
            <person name="Liberton M."/>
            <person name="Min H."/>
            <person name="Sherman L.A."/>
            <person name="Pakrasi H.B."/>
        </authorList>
    </citation>
    <scope>NUCLEOTIDE SEQUENCE [LARGE SCALE GENOMIC DNA]</scope>
    <source>
        <strain>PCC 8801 / RF-1</strain>
    </source>
</reference>
<organism>
    <name type="scientific">Rippkaea orientalis (strain PCC 8801 / RF-1)</name>
    <name type="common">Cyanothece sp. (strain PCC 8801)</name>
    <dbReference type="NCBI Taxonomy" id="41431"/>
    <lineage>
        <taxon>Bacteria</taxon>
        <taxon>Bacillati</taxon>
        <taxon>Cyanobacteriota</taxon>
        <taxon>Cyanophyceae</taxon>
        <taxon>Oscillatoriophycideae</taxon>
        <taxon>Chroococcales</taxon>
        <taxon>Aphanothecaceae</taxon>
        <taxon>Rippkaea</taxon>
        <taxon>Rippkaea orientalis</taxon>
    </lineage>
</organism>
<gene>
    <name evidence="1" type="primary">psbY</name>
    <name type="ordered locus">PCC8801_3099</name>
</gene>
<sequence>MDWRVLVVVGPLLIAASWAVFNIGAAAIRQLQEFRSRES</sequence>
<accession>B7JX92</accession>
<evidence type="ECO:0000255" key="1">
    <source>
        <dbReference type="HAMAP-Rule" id="MF_00717"/>
    </source>
</evidence>
<comment type="function">
    <text evidence="1">Loosely associated component of the core of photosystem II (PSII), it is not always seen in crystals. PSII is a light-driven water plastoquinone oxidoreductase, using light energy to abstract electrons from H(2)O, generating a proton gradient subsequently used for ATP formation.</text>
</comment>
<comment type="subunit">
    <text evidence="1">PSII is composed of 1 copy each of membrane proteins PsbA, PsbB, PsbC, PsbD, PsbE, PsbF, PsbH, PsbI, PsbJ, PsbK, PsbL, PsbM, PsbT, PsbX, PsbY, PsbZ, Psb30/Ycf12, peripheral proteins PsbO, CyanoQ (PsbQ), PsbU, PsbV and a large number of cofactors. It forms dimeric complexes.</text>
</comment>
<comment type="subcellular location">
    <subcellularLocation>
        <location evidence="1">Cellular thylakoid membrane</location>
        <topology evidence="1">Single-pass membrane protein</topology>
    </subcellularLocation>
</comment>
<comment type="similarity">
    <text evidence="1">Belongs to the PsbY family.</text>
</comment>
<feature type="chain" id="PRO_1000192884" description="Photosystem II reaction center protein Y">
    <location>
        <begin position="1"/>
        <end position="39"/>
    </location>
</feature>
<feature type="transmembrane region" description="Helical" evidence="1">
    <location>
        <begin position="5"/>
        <end position="23"/>
    </location>
</feature>
<proteinExistence type="inferred from homology"/>
<dbReference type="EMBL" id="CP001287">
    <property type="protein sequence ID" value="ACK67080.1"/>
    <property type="molecule type" value="Genomic_DNA"/>
</dbReference>
<dbReference type="RefSeq" id="WP_012596341.1">
    <property type="nucleotide sequence ID" value="NC_011726.1"/>
</dbReference>
<dbReference type="SMR" id="B7JX92"/>
<dbReference type="STRING" id="41431.PCC8801_3099"/>
<dbReference type="KEGG" id="cyp:PCC8801_3099"/>
<dbReference type="eggNOG" id="ENOG5032HC4">
    <property type="taxonomic scope" value="Bacteria"/>
</dbReference>
<dbReference type="HOGENOM" id="CLU_218393_1_0_3"/>
<dbReference type="OrthoDB" id="561045at2"/>
<dbReference type="Proteomes" id="UP000008204">
    <property type="component" value="Chromosome"/>
</dbReference>
<dbReference type="GO" id="GO:0009523">
    <property type="term" value="C:photosystem II"/>
    <property type="evidence" value="ECO:0007669"/>
    <property type="project" value="UniProtKB-KW"/>
</dbReference>
<dbReference type="GO" id="GO:0031676">
    <property type="term" value="C:plasma membrane-derived thylakoid membrane"/>
    <property type="evidence" value="ECO:0007669"/>
    <property type="project" value="UniProtKB-SubCell"/>
</dbReference>
<dbReference type="GO" id="GO:0030145">
    <property type="term" value="F:manganese ion binding"/>
    <property type="evidence" value="ECO:0007669"/>
    <property type="project" value="InterPro"/>
</dbReference>
<dbReference type="GO" id="GO:0015979">
    <property type="term" value="P:photosynthesis"/>
    <property type="evidence" value="ECO:0007669"/>
    <property type="project" value="UniProtKB-UniRule"/>
</dbReference>
<dbReference type="HAMAP" id="MF_00717">
    <property type="entry name" value="PSII_PsbY"/>
    <property type="match status" value="1"/>
</dbReference>
<dbReference type="InterPro" id="IPR009388">
    <property type="entry name" value="PSII_PsbY"/>
</dbReference>
<dbReference type="NCBIfam" id="NF009711">
    <property type="entry name" value="PRK13240.1"/>
    <property type="match status" value="1"/>
</dbReference>
<dbReference type="Pfam" id="PF06298">
    <property type="entry name" value="PsbY"/>
    <property type="match status" value="1"/>
</dbReference>
<protein>
    <recommendedName>
        <fullName evidence="1">Photosystem II reaction center protein Y</fullName>
    </recommendedName>
</protein>
<keyword id="KW-0472">Membrane</keyword>
<keyword id="KW-0602">Photosynthesis</keyword>
<keyword id="KW-0604">Photosystem II</keyword>
<keyword id="KW-1185">Reference proteome</keyword>
<keyword id="KW-0793">Thylakoid</keyword>
<keyword id="KW-0812">Transmembrane</keyword>
<keyword id="KW-1133">Transmembrane helix</keyword>